<gene>
    <name evidence="1" type="primary">pyrH</name>
    <name type="ordered locus">UNCMA_12040</name>
    <name type="ORF">RCIX1856</name>
</gene>
<organism>
    <name type="scientific">Methanocella arvoryzae (strain DSM 22066 / NBRC 105507 / MRE50)</name>
    <dbReference type="NCBI Taxonomy" id="351160"/>
    <lineage>
        <taxon>Archaea</taxon>
        <taxon>Methanobacteriati</taxon>
        <taxon>Methanobacteriota</taxon>
        <taxon>Stenosarchaea group</taxon>
        <taxon>Methanomicrobia</taxon>
        <taxon>Methanocellales</taxon>
        <taxon>Methanocellaceae</taxon>
        <taxon>Methanocella</taxon>
    </lineage>
</organism>
<feature type="chain" id="PRO_1000054049" description="Uridylate kinase">
    <location>
        <begin position="1"/>
        <end position="224"/>
    </location>
</feature>
<feature type="binding site" evidence="1">
    <location>
        <begin position="9"/>
        <end position="10"/>
    </location>
    <ligand>
        <name>ATP</name>
        <dbReference type="ChEBI" id="CHEBI:30616"/>
    </ligand>
</feature>
<feature type="binding site" evidence="1">
    <location>
        <position position="43"/>
    </location>
    <ligand>
        <name>UMP</name>
        <dbReference type="ChEBI" id="CHEBI:57865"/>
    </ligand>
</feature>
<feature type="binding site" evidence="1">
    <location>
        <position position="44"/>
    </location>
    <ligand>
        <name>ATP</name>
        <dbReference type="ChEBI" id="CHEBI:30616"/>
    </ligand>
</feature>
<feature type="binding site" evidence="1">
    <location>
        <position position="48"/>
    </location>
    <ligand>
        <name>ATP</name>
        <dbReference type="ChEBI" id="CHEBI:30616"/>
    </ligand>
</feature>
<feature type="binding site" evidence="1">
    <location>
        <position position="65"/>
    </location>
    <ligand>
        <name>UMP</name>
        <dbReference type="ChEBI" id="CHEBI:57865"/>
    </ligand>
</feature>
<feature type="binding site" evidence="1">
    <location>
        <begin position="113"/>
        <end position="119"/>
    </location>
    <ligand>
        <name>UMP</name>
        <dbReference type="ChEBI" id="CHEBI:57865"/>
    </ligand>
</feature>
<feature type="binding site" evidence="1">
    <location>
        <position position="139"/>
    </location>
    <ligand>
        <name>ATP</name>
        <dbReference type="ChEBI" id="CHEBI:30616"/>
    </ligand>
</feature>
<feature type="binding site" evidence="1">
    <location>
        <position position="145"/>
    </location>
    <ligand>
        <name>ATP</name>
        <dbReference type="ChEBI" id="CHEBI:30616"/>
    </ligand>
</feature>
<feature type="binding site" evidence="1">
    <location>
        <position position="148"/>
    </location>
    <ligand>
        <name>ATP</name>
        <dbReference type="ChEBI" id="CHEBI:30616"/>
    </ligand>
</feature>
<dbReference type="EC" id="2.7.4.22" evidence="1"/>
<dbReference type="EMBL" id="AM114193">
    <property type="protein sequence ID" value="CAJ37037.1"/>
    <property type="molecule type" value="Genomic_DNA"/>
</dbReference>
<dbReference type="RefSeq" id="WP_012035532.1">
    <property type="nucleotide sequence ID" value="NC_009464.1"/>
</dbReference>
<dbReference type="SMR" id="Q0W3K6"/>
<dbReference type="STRING" id="351160.RCIX1856"/>
<dbReference type="GeneID" id="5144337"/>
<dbReference type="KEGG" id="rci:RCIX1856"/>
<dbReference type="PATRIC" id="fig|351160.9.peg.1240"/>
<dbReference type="eggNOG" id="arCOG00858">
    <property type="taxonomic scope" value="Archaea"/>
</dbReference>
<dbReference type="OrthoDB" id="372251at2157"/>
<dbReference type="UniPathway" id="UPA00159">
    <property type="reaction ID" value="UER00275"/>
</dbReference>
<dbReference type="Proteomes" id="UP000000663">
    <property type="component" value="Chromosome"/>
</dbReference>
<dbReference type="GO" id="GO:0005737">
    <property type="term" value="C:cytoplasm"/>
    <property type="evidence" value="ECO:0007669"/>
    <property type="project" value="UniProtKB-SubCell"/>
</dbReference>
<dbReference type="GO" id="GO:0005524">
    <property type="term" value="F:ATP binding"/>
    <property type="evidence" value="ECO:0007669"/>
    <property type="project" value="UniProtKB-KW"/>
</dbReference>
<dbReference type="GO" id="GO:0033862">
    <property type="term" value="F:UMP kinase activity"/>
    <property type="evidence" value="ECO:0007669"/>
    <property type="project" value="UniProtKB-EC"/>
</dbReference>
<dbReference type="GO" id="GO:0044210">
    <property type="term" value="P:'de novo' CTP biosynthetic process"/>
    <property type="evidence" value="ECO:0007669"/>
    <property type="project" value="UniProtKB-UniRule"/>
</dbReference>
<dbReference type="GO" id="GO:0006225">
    <property type="term" value="P:UDP biosynthetic process"/>
    <property type="evidence" value="ECO:0007669"/>
    <property type="project" value="TreeGrafter"/>
</dbReference>
<dbReference type="CDD" id="cd04253">
    <property type="entry name" value="AAK_UMPK-PyrH-Pf"/>
    <property type="match status" value="1"/>
</dbReference>
<dbReference type="Gene3D" id="3.40.1160.10">
    <property type="entry name" value="Acetylglutamate kinase-like"/>
    <property type="match status" value="1"/>
</dbReference>
<dbReference type="HAMAP" id="MF_01220_A">
    <property type="entry name" value="PyrH_A"/>
    <property type="match status" value="1"/>
</dbReference>
<dbReference type="InterPro" id="IPR036393">
    <property type="entry name" value="AceGlu_kinase-like_sf"/>
</dbReference>
<dbReference type="InterPro" id="IPR001048">
    <property type="entry name" value="Asp/Glu/Uridylate_kinase"/>
</dbReference>
<dbReference type="InterPro" id="IPR011817">
    <property type="entry name" value="Uridylate_kinase"/>
</dbReference>
<dbReference type="InterPro" id="IPR011818">
    <property type="entry name" value="Uridylate_kinase_arch/spir"/>
</dbReference>
<dbReference type="NCBIfam" id="TIGR02076">
    <property type="entry name" value="pyrH_arch"/>
    <property type="match status" value="1"/>
</dbReference>
<dbReference type="PANTHER" id="PTHR42833">
    <property type="entry name" value="URIDYLATE KINASE"/>
    <property type="match status" value="1"/>
</dbReference>
<dbReference type="PANTHER" id="PTHR42833:SF4">
    <property type="entry name" value="URIDYLATE KINASE PUMPKIN, CHLOROPLASTIC"/>
    <property type="match status" value="1"/>
</dbReference>
<dbReference type="Pfam" id="PF00696">
    <property type="entry name" value="AA_kinase"/>
    <property type="match status" value="1"/>
</dbReference>
<dbReference type="PIRSF" id="PIRSF005650">
    <property type="entry name" value="Uridylate_kin"/>
    <property type="match status" value="1"/>
</dbReference>
<dbReference type="SUPFAM" id="SSF53633">
    <property type="entry name" value="Carbamate kinase-like"/>
    <property type="match status" value="1"/>
</dbReference>
<name>PYRH_METAR</name>
<proteinExistence type="inferred from homology"/>
<comment type="function">
    <text evidence="1">Catalyzes the reversible phosphorylation of UMP to UDP.</text>
</comment>
<comment type="catalytic activity">
    <reaction evidence="1">
        <text>UMP + ATP = UDP + ADP</text>
        <dbReference type="Rhea" id="RHEA:24400"/>
        <dbReference type="ChEBI" id="CHEBI:30616"/>
        <dbReference type="ChEBI" id="CHEBI:57865"/>
        <dbReference type="ChEBI" id="CHEBI:58223"/>
        <dbReference type="ChEBI" id="CHEBI:456216"/>
        <dbReference type="EC" id="2.7.4.22"/>
    </reaction>
</comment>
<comment type="activity regulation">
    <text evidence="1">Inhibited by UTP.</text>
</comment>
<comment type="pathway">
    <text evidence="1">Pyrimidine metabolism; CTP biosynthesis via de novo pathway; UDP from UMP (UMPK route): step 1/1.</text>
</comment>
<comment type="subunit">
    <text evidence="1">Homohexamer.</text>
</comment>
<comment type="subcellular location">
    <subcellularLocation>
        <location evidence="1">Cytoplasm</location>
    </subcellularLocation>
</comment>
<comment type="similarity">
    <text evidence="1">Belongs to the UMP kinase family.</text>
</comment>
<accession>Q0W3K6</accession>
<protein>
    <recommendedName>
        <fullName evidence="1">Uridylate kinase</fullName>
        <shortName evidence="1">UK</shortName>
        <ecNumber evidence="1">2.7.4.22</ecNumber>
    </recommendedName>
    <alternativeName>
        <fullName evidence="1">Uridine monophosphate kinase</fullName>
        <shortName evidence="1">UMP kinase</shortName>
        <shortName evidence="1">UMPK</shortName>
    </alternativeName>
</protein>
<evidence type="ECO:0000255" key="1">
    <source>
        <dbReference type="HAMAP-Rule" id="MF_01220"/>
    </source>
</evidence>
<reference key="1">
    <citation type="journal article" date="2006" name="Science">
        <title>Genome of rice cluster I archaea -- the key methane producers in the rice rhizosphere.</title>
        <authorList>
            <person name="Erkel C."/>
            <person name="Kube M."/>
            <person name="Reinhardt R."/>
            <person name="Liesack W."/>
        </authorList>
    </citation>
    <scope>NUCLEOTIDE SEQUENCE [LARGE SCALE GENOMIC DNA]</scope>
    <source>
        <strain>DSM 22066 / NBRC 105507 / MRE50</strain>
    </source>
</reference>
<sequence>MKIVVKVGGSAIVQGLDAQRFKDYADVIKQLAEDHTILIVIGGGTPARDYINVSKQLGANNSILDYIGIGVSRLNARLLISALGDIAYPEPPYDYKDAGLAMYSGKVVVMGGVVPGQTTDAVAAILAEYVHADLLIRTTSVDGVFTADPKLDPKATKIDSMTPQELVDMVTKIEMTAGANNIFDPLGAQIVKRSRIPTVVVNGKQPENLIKAVKGEPIGTIIKE</sequence>
<keyword id="KW-0067">ATP-binding</keyword>
<keyword id="KW-0963">Cytoplasm</keyword>
<keyword id="KW-0418">Kinase</keyword>
<keyword id="KW-0547">Nucleotide-binding</keyword>
<keyword id="KW-0665">Pyrimidine biosynthesis</keyword>
<keyword id="KW-1185">Reference proteome</keyword>
<keyword id="KW-0808">Transferase</keyword>